<dbReference type="EC" id="1.1.98.3" evidence="8"/>
<dbReference type="EMBL" id="AL123456">
    <property type="protein sequence ID" value="CCP46619.1"/>
    <property type="molecule type" value="Genomic_DNA"/>
</dbReference>
<dbReference type="PIR" id="B70697">
    <property type="entry name" value="B70697"/>
</dbReference>
<dbReference type="RefSeq" id="NP_218307.1">
    <property type="nucleotide sequence ID" value="NC_000962.3"/>
</dbReference>
<dbReference type="RefSeq" id="WP_003420630.1">
    <property type="nucleotide sequence ID" value="NZ_NVQJ01000009.1"/>
</dbReference>
<dbReference type="PDB" id="4FDN">
    <property type="method" value="X-ray"/>
    <property type="resolution" value="2.40 A"/>
    <property type="chains" value="A=1-461"/>
</dbReference>
<dbReference type="PDB" id="4FDO">
    <property type="method" value="X-ray"/>
    <property type="resolution" value="2.40 A"/>
    <property type="chains" value="A=1-461"/>
</dbReference>
<dbReference type="PDB" id="4FDP">
    <property type="method" value="X-ray"/>
    <property type="resolution" value="2.23 A"/>
    <property type="chains" value="A/B=1-461"/>
</dbReference>
<dbReference type="PDB" id="4FEH">
    <property type="method" value="X-ray"/>
    <property type="resolution" value="2.04 A"/>
    <property type="chains" value="A=1-461"/>
</dbReference>
<dbReference type="PDB" id="4FF6">
    <property type="method" value="X-ray"/>
    <property type="resolution" value="2.60 A"/>
    <property type="chains" value="A/B=1-461"/>
</dbReference>
<dbReference type="PDB" id="4KW5">
    <property type="method" value="X-ray"/>
    <property type="resolution" value="2.61 A"/>
    <property type="chains" value="A/B=1-461"/>
</dbReference>
<dbReference type="PDB" id="4NCR">
    <property type="method" value="X-ray"/>
    <property type="resolution" value="1.88 A"/>
    <property type="chains" value="A/B=1-461"/>
</dbReference>
<dbReference type="PDB" id="4P8C">
    <property type="method" value="X-ray"/>
    <property type="resolution" value="1.95 A"/>
    <property type="chains" value="A/B=1-461"/>
</dbReference>
<dbReference type="PDB" id="4P8H">
    <property type="method" value="X-ray"/>
    <property type="resolution" value="3.00 A"/>
    <property type="chains" value="A/B=1-461"/>
</dbReference>
<dbReference type="PDB" id="4P8K">
    <property type="method" value="X-ray"/>
    <property type="resolution" value="2.49 A"/>
    <property type="chains" value="A/B=1-461"/>
</dbReference>
<dbReference type="PDB" id="4P8L">
    <property type="method" value="X-ray"/>
    <property type="resolution" value="2.02 A"/>
    <property type="chains" value="A/B=1-461"/>
</dbReference>
<dbReference type="PDB" id="4P8M">
    <property type="method" value="X-ray"/>
    <property type="resolution" value="2.09 A"/>
    <property type="chains" value="A/B=1-461"/>
</dbReference>
<dbReference type="PDB" id="4P8N">
    <property type="method" value="X-ray"/>
    <property type="resolution" value="1.79 A"/>
    <property type="chains" value="A/B=1-461"/>
</dbReference>
<dbReference type="PDB" id="4P8P">
    <property type="method" value="X-ray"/>
    <property type="resolution" value="2.20 A"/>
    <property type="chains" value="A/B=1-461"/>
</dbReference>
<dbReference type="PDB" id="4P8T">
    <property type="method" value="X-ray"/>
    <property type="resolution" value="2.55 A"/>
    <property type="chains" value="A/B=1-461"/>
</dbReference>
<dbReference type="PDB" id="4P8Y">
    <property type="method" value="X-ray"/>
    <property type="resolution" value="2.01 A"/>
    <property type="chains" value="A/B=1-461"/>
</dbReference>
<dbReference type="PDB" id="4PFA">
    <property type="method" value="X-ray"/>
    <property type="resolution" value="2.56 A"/>
    <property type="chains" value="A/B=1-461"/>
</dbReference>
<dbReference type="PDB" id="4PFD">
    <property type="method" value="X-ray"/>
    <property type="resolution" value="2.30 A"/>
    <property type="chains" value="A/B=1-461"/>
</dbReference>
<dbReference type="PDB" id="5OEL">
    <property type="method" value="X-ray"/>
    <property type="resolution" value="2.20 A"/>
    <property type="chains" value="A/B=1-461"/>
</dbReference>
<dbReference type="PDB" id="5OEP">
    <property type="method" value="X-ray"/>
    <property type="resolution" value="2.35 A"/>
    <property type="chains" value="A/B=1-461"/>
</dbReference>
<dbReference type="PDB" id="5OEQ">
    <property type="method" value="X-ray"/>
    <property type="resolution" value="2.25 A"/>
    <property type="chains" value="A/B=1-461"/>
</dbReference>
<dbReference type="PDB" id="6G83">
    <property type="method" value="X-ray"/>
    <property type="resolution" value="2.40 A"/>
    <property type="chains" value="A/B=1-461"/>
</dbReference>
<dbReference type="PDB" id="6HEZ">
    <property type="method" value="X-ray"/>
    <property type="resolution" value="2.30 A"/>
    <property type="chains" value="A/B=1-461"/>
</dbReference>
<dbReference type="PDB" id="6HF0">
    <property type="method" value="X-ray"/>
    <property type="resolution" value="2.38 A"/>
    <property type="chains" value="A/B=1-461"/>
</dbReference>
<dbReference type="PDB" id="6HF3">
    <property type="method" value="X-ray"/>
    <property type="resolution" value="2.20 A"/>
    <property type="chains" value="A/B=1-461"/>
</dbReference>
<dbReference type="PDB" id="6HFV">
    <property type="method" value="X-ray"/>
    <property type="resolution" value="2.05 A"/>
    <property type="chains" value="A/B=1-461"/>
</dbReference>
<dbReference type="PDB" id="6HFW">
    <property type="method" value="X-ray"/>
    <property type="resolution" value="2.47 A"/>
    <property type="chains" value="A/B=1-461"/>
</dbReference>
<dbReference type="PDBsum" id="4FDN"/>
<dbReference type="PDBsum" id="4FDO"/>
<dbReference type="PDBsum" id="4FDP"/>
<dbReference type="PDBsum" id="4FEH"/>
<dbReference type="PDBsum" id="4FF6"/>
<dbReference type="PDBsum" id="4KW5"/>
<dbReference type="PDBsum" id="4NCR"/>
<dbReference type="PDBsum" id="4P8C"/>
<dbReference type="PDBsum" id="4P8H"/>
<dbReference type="PDBsum" id="4P8K"/>
<dbReference type="PDBsum" id="4P8L"/>
<dbReference type="PDBsum" id="4P8M"/>
<dbReference type="PDBsum" id="4P8N"/>
<dbReference type="PDBsum" id="4P8P"/>
<dbReference type="PDBsum" id="4P8T"/>
<dbReference type="PDBsum" id="4P8Y"/>
<dbReference type="PDBsum" id="4PFA"/>
<dbReference type="PDBsum" id="4PFD"/>
<dbReference type="PDBsum" id="5OEL"/>
<dbReference type="PDBsum" id="5OEP"/>
<dbReference type="PDBsum" id="5OEQ"/>
<dbReference type="PDBsum" id="6G83"/>
<dbReference type="PDBsum" id="6HEZ"/>
<dbReference type="PDBsum" id="6HF0"/>
<dbReference type="PDBsum" id="6HF3"/>
<dbReference type="PDBsum" id="6HFV"/>
<dbReference type="PDBsum" id="6HFW"/>
<dbReference type="SMR" id="P9WJF1"/>
<dbReference type="STRING" id="83332.Rv3790"/>
<dbReference type="BindingDB" id="P9WJF1"/>
<dbReference type="ChEMBL" id="CHEMBL3804751"/>
<dbReference type="PaxDb" id="83332-Rv3790"/>
<dbReference type="DNASU" id="886125"/>
<dbReference type="GeneID" id="886125"/>
<dbReference type="KEGG" id="mtu:Rv3790"/>
<dbReference type="KEGG" id="mtv:RVBD_3790"/>
<dbReference type="TubercuList" id="Rv3790"/>
<dbReference type="eggNOG" id="COG0277">
    <property type="taxonomic scope" value="Bacteria"/>
</dbReference>
<dbReference type="InParanoid" id="P9WJF1"/>
<dbReference type="OrthoDB" id="143770at2"/>
<dbReference type="PhylomeDB" id="P9WJF1"/>
<dbReference type="BioCyc" id="MetaCyc:G185E-8086-MONOMER"/>
<dbReference type="BRENDA" id="1.1.98.3">
    <property type="organism ID" value="3445"/>
</dbReference>
<dbReference type="UniPathway" id="UPA00963"/>
<dbReference type="EvolutionaryTrace" id="P9WJF1"/>
<dbReference type="Proteomes" id="UP000001584">
    <property type="component" value="Chromosome"/>
</dbReference>
<dbReference type="GO" id="GO:0042597">
    <property type="term" value="C:periplasmic space"/>
    <property type="evidence" value="ECO:0007669"/>
    <property type="project" value="UniProtKB-SubCell"/>
</dbReference>
<dbReference type="GO" id="GO:0005886">
    <property type="term" value="C:plasma membrane"/>
    <property type="evidence" value="ECO:0007005"/>
    <property type="project" value="MTBBASE"/>
</dbReference>
<dbReference type="GO" id="GO:0003885">
    <property type="term" value="F:D-arabinono-1,4-lactone oxidase activity"/>
    <property type="evidence" value="ECO:0007669"/>
    <property type="project" value="InterPro"/>
</dbReference>
<dbReference type="GO" id="GO:0071949">
    <property type="term" value="F:FAD binding"/>
    <property type="evidence" value="ECO:0007669"/>
    <property type="project" value="InterPro"/>
</dbReference>
<dbReference type="GO" id="GO:0016491">
    <property type="term" value="F:oxidoreductase activity"/>
    <property type="evidence" value="ECO:0000318"/>
    <property type="project" value="GO_Central"/>
</dbReference>
<dbReference type="GO" id="GO:0035884">
    <property type="term" value="P:arabinan biosynthetic process"/>
    <property type="evidence" value="ECO:0000314"/>
    <property type="project" value="MTBBASE"/>
</dbReference>
<dbReference type="GO" id="GO:0045227">
    <property type="term" value="P:capsule polysaccharide biosynthetic process"/>
    <property type="evidence" value="ECO:0007669"/>
    <property type="project" value="UniProtKB-UniPathway"/>
</dbReference>
<dbReference type="GO" id="GO:0071555">
    <property type="term" value="P:cell wall organization"/>
    <property type="evidence" value="ECO:0007669"/>
    <property type="project" value="UniProtKB-KW"/>
</dbReference>
<dbReference type="GO" id="GO:0070592">
    <property type="term" value="P:cell wall polysaccharide biosynthetic process"/>
    <property type="evidence" value="ECO:0000314"/>
    <property type="project" value="MTBBASE"/>
</dbReference>
<dbReference type="GO" id="GO:0046677">
    <property type="term" value="P:response to antibiotic"/>
    <property type="evidence" value="ECO:0007669"/>
    <property type="project" value="UniProtKB-KW"/>
</dbReference>
<dbReference type="FunFam" id="3.30.465.10:FF:000052">
    <property type="entry name" value="Decaprenylphosphoryl-beta-D-ribose oxidase"/>
    <property type="match status" value="1"/>
</dbReference>
<dbReference type="Gene3D" id="3.30.465.10">
    <property type="match status" value="1"/>
</dbReference>
<dbReference type="InterPro" id="IPR007173">
    <property type="entry name" value="ALO_C"/>
</dbReference>
<dbReference type="InterPro" id="IPR016166">
    <property type="entry name" value="FAD-bd_PCMH"/>
</dbReference>
<dbReference type="InterPro" id="IPR036318">
    <property type="entry name" value="FAD-bd_PCMH-like_sf"/>
</dbReference>
<dbReference type="InterPro" id="IPR016169">
    <property type="entry name" value="FAD-bd_PCMH_sub2"/>
</dbReference>
<dbReference type="InterPro" id="IPR010031">
    <property type="entry name" value="FAD_lactone_oxidase-like"/>
</dbReference>
<dbReference type="InterPro" id="IPR006094">
    <property type="entry name" value="Oxid_FAD_bind_N"/>
</dbReference>
<dbReference type="PANTHER" id="PTHR43762:SF1">
    <property type="entry name" value="D-ARABINONO-1,4-LACTONE OXIDASE"/>
    <property type="match status" value="1"/>
</dbReference>
<dbReference type="PANTHER" id="PTHR43762">
    <property type="entry name" value="L-GULONOLACTONE OXIDASE"/>
    <property type="match status" value="1"/>
</dbReference>
<dbReference type="Pfam" id="PF04030">
    <property type="entry name" value="ALO"/>
    <property type="match status" value="1"/>
</dbReference>
<dbReference type="Pfam" id="PF01565">
    <property type="entry name" value="FAD_binding_4"/>
    <property type="match status" value="1"/>
</dbReference>
<dbReference type="SUPFAM" id="SSF56176">
    <property type="entry name" value="FAD-binding/transporter-associated domain-like"/>
    <property type="match status" value="1"/>
</dbReference>
<dbReference type="PROSITE" id="PS51387">
    <property type="entry name" value="FAD_PCMH"/>
    <property type="match status" value="1"/>
</dbReference>
<accession>P9WJF1</accession>
<accession>L0TDT1</accession>
<accession>P72056</accession>
<accession>Q7D4V3</accession>
<reference key="1">
    <citation type="journal article" date="1998" name="Nature">
        <title>Deciphering the biology of Mycobacterium tuberculosis from the complete genome sequence.</title>
        <authorList>
            <person name="Cole S.T."/>
            <person name="Brosch R."/>
            <person name="Parkhill J."/>
            <person name="Garnier T."/>
            <person name="Churcher C.M."/>
            <person name="Harris D.E."/>
            <person name="Gordon S.V."/>
            <person name="Eiglmeier K."/>
            <person name="Gas S."/>
            <person name="Barry C.E. III"/>
            <person name="Tekaia F."/>
            <person name="Badcock K."/>
            <person name="Basham D."/>
            <person name="Brown D."/>
            <person name="Chillingworth T."/>
            <person name="Connor R."/>
            <person name="Davies R.M."/>
            <person name="Devlin K."/>
            <person name="Feltwell T."/>
            <person name="Gentles S."/>
            <person name="Hamlin N."/>
            <person name="Holroyd S."/>
            <person name="Hornsby T."/>
            <person name="Jagels K."/>
            <person name="Krogh A."/>
            <person name="McLean J."/>
            <person name="Moule S."/>
            <person name="Murphy L.D."/>
            <person name="Oliver S."/>
            <person name="Osborne J."/>
            <person name="Quail M.A."/>
            <person name="Rajandream M.A."/>
            <person name="Rogers J."/>
            <person name="Rutter S."/>
            <person name="Seeger K."/>
            <person name="Skelton S."/>
            <person name="Squares S."/>
            <person name="Squares R."/>
            <person name="Sulston J.E."/>
            <person name="Taylor K."/>
            <person name="Whitehead S."/>
            <person name="Barrell B.G."/>
        </authorList>
    </citation>
    <scope>NUCLEOTIDE SEQUENCE [LARGE SCALE GENOMIC DNA]</scope>
    <source>
        <strain>ATCC 25618 / H37Rv</strain>
    </source>
</reference>
<reference key="2">
    <citation type="journal article" date="2003" name="Mol. Microbiol.">
        <title>Genes required for mycobacterial growth defined by high density mutagenesis.</title>
        <authorList>
            <person name="Sassetti C.M."/>
            <person name="Boyd D.H."/>
            <person name="Rubin E.J."/>
        </authorList>
    </citation>
    <scope>DISRUPTION PHENOTYPE</scope>
    <source>
        <strain>ATCC 25618 / H37Rv</strain>
    </source>
</reference>
<reference key="3">
    <citation type="journal article" date="2005" name="J. Bacteriol.">
        <title>Decaprenylphosphoryl arabinofuranose, the donor of the D-arabinofuranosyl residues of mycobacterial arabinan, is formed via a two-step epimerization of decaprenylphosphoryl ribose.</title>
        <authorList>
            <person name="Mikusova K."/>
            <person name="Huang H."/>
            <person name="Yagi T."/>
            <person name="Holsters M."/>
            <person name="Vereecke D."/>
            <person name="D'Haeze W."/>
            <person name="Scherman M.S."/>
            <person name="Brennan P.J."/>
            <person name="McNeil M.R."/>
            <person name="Crick D.C."/>
        </authorList>
    </citation>
    <scope>FUNCTION IN DPR EPIMERIZATION</scope>
    <scope>PATHWAY</scope>
    <source>
        <strain>H37Rv</strain>
    </source>
</reference>
<reference key="4">
    <citation type="journal article" date="2008" name="BMC Syst. Biol.">
        <title>targetTB: a target identification pipeline for Mycobacterium tuberculosis through an interactome, reactome and genome-scale structural analysis.</title>
        <authorList>
            <person name="Raman K."/>
            <person name="Yeturu K."/>
            <person name="Chandra N."/>
        </authorList>
    </citation>
    <scope>IDENTIFICATION AS A DRUG TARGET [LARGE SCALE ANALYSIS]</scope>
</reference>
<reference key="5">
    <citation type="journal article" date="2009" name="PLoS Pathog.">
        <title>High content screening identifies decaprenyl-phosphoribose 2' epimerase as a target for intracellular antimycobacterial inhibitors.</title>
        <authorList>
            <person name="Christophe T."/>
            <person name="Jackson M."/>
            <person name="Jeon H.K."/>
            <person name="Fenistein D."/>
            <person name="Contreras-Dominguez M."/>
            <person name="Kim J."/>
            <person name="Genovesio A."/>
            <person name="Carralot J.P."/>
            <person name="Ewann F."/>
            <person name="Kim E.H."/>
            <person name="Lee S.Y."/>
            <person name="Kang S."/>
            <person name="Seo M.J."/>
            <person name="Park E.J."/>
            <person name="Skovierova H."/>
            <person name="Pham H."/>
            <person name="Riccardi G."/>
            <person name="Nam J.Y."/>
            <person name="Marsollier L."/>
            <person name="Kempf M."/>
            <person name="Joly-Guillou M.L."/>
            <person name="Oh T."/>
            <person name="Shin W.K."/>
            <person name="No Z."/>
            <person name="Nehrbass U."/>
            <person name="Brosch R."/>
            <person name="Cole S.T."/>
            <person name="Brodin P."/>
        </authorList>
    </citation>
    <scope>ACTIVITY REGULATION</scope>
    <scope>INHIBITOR SCREENING</scope>
    <source>
        <strain>H37Rv</strain>
    </source>
</reference>
<reference key="6">
    <citation type="journal article" date="2009" name="Science">
        <title>Benzothiazinones kill Mycobacterium tuberculosis by blocking arabinan synthesis.</title>
        <authorList>
            <person name="Makarov V."/>
            <person name="Manina G."/>
            <person name="Mikusova K."/>
            <person name="Mollmann U."/>
            <person name="Ryabova O."/>
            <person name="Saint-Joanis B."/>
            <person name="Dhar N."/>
            <person name="Pasca M.R."/>
            <person name="Buroni S."/>
            <person name="Lucarelli A.P."/>
            <person name="Milano A."/>
            <person name="De Rossi E."/>
            <person name="Belanova M."/>
            <person name="Bobovska A."/>
            <person name="Dianiskova P."/>
            <person name="Kordulakova J."/>
            <person name="Sala C."/>
            <person name="Fullam E."/>
            <person name="Schneider P."/>
            <person name="McKinney J.D."/>
            <person name="Brodin P."/>
            <person name="Christophe T."/>
            <person name="Waddell S."/>
            <person name="Butcher P."/>
            <person name="Albrethsen J."/>
            <person name="Rosenkrands I."/>
            <person name="Brosch R."/>
            <person name="Nandi V."/>
            <person name="Bharath S."/>
            <person name="Gaonkar S."/>
            <person name="Shandil R.K."/>
            <person name="Balasubramanian V."/>
            <person name="Balganesh T."/>
            <person name="Tyagi S."/>
            <person name="Grosset J."/>
            <person name="Riccardi G."/>
            <person name="Cole S.T."/>
        </authorList>
    </citation>
    <scope>FUNCTION IN DPR EPIMERIZATION</scope>
    <scope>ACTIVITY REGULATION</scope>
    <scope>DRUG TARGET</scope>
    <scope>BTZ043-RESISTANT VARIANTS NTB1 AND NTB9</scope>
    <source>
        <strain>H37Rv</strain>
    </source>
</reference>
<reference key="7">
    <citation type="journal article" date="2010" name="Curr. Med. Chem.">
        <title>Decaprenylphosphoryl-beta-D-ribose 2'-epimerase from Mycobacterium tuberculosis is a magic drug target.</title>
        <authorList>
            <person name="Manina G."/>
            <person name="Pasca M.R."/>
            <person name="Buroni S."/>
            <person name="De Rossi E."/>
            <person name="Riccardi G."/>
        </authorList>
    </citation>
    <scope>REVIEW</scope>
    <scope>DRUG TARGET</scope>
</reference>
<reference key="8">
    <citation type="journal article" date="2010" name="J. Am. Chem. Soc.">
        <title>Benzothiazinones: prodrugs that covalently modify the decaprenylphosphoryl-beta-D-ribose 2'-epimerase DprE1 of Mycobacterium tuberculosis.</title>
        <authorList>
            <person name="Trefzer C."/>
            <person name="Rengifo-Gonzalez M."/>
            <person name="Hinner M.J."/>
            <person name="Schneider P."/>
            <person name="Makarov V."/>
            <person name="Cole S.T."/>
            <person name="Johnsson K."/>
        </authorList>
    </citation>
    <scope>ACTIVITY REGULATION</scope>
    <scope>MECHANISM OF ACTION OF BENZOTHIAZINONES</scope>
    <scope>MUTAGENESIS OF CYS-387</scope>
    <scope>3D-STRUCTURE MODELING</scope>
</reference>
<reference key="9">
    <citation type="journal article" date="2011" name="Mol. Cell. Proteomics">
        <title>Proteogenomic analysis of Mycobacterium tuberculosis by high resolution mass spectrometry.</title>
        <authorList>
            <person name="Kelkar D.S."/>
            <person name="Kumar D."/>
            <person name="Kumar P."/>
            <person name="Balakrishnan L."/>
            <person name="Muthusamy B."/>
            <person name="Yadav A.K."/>
            <person name="Shrivastava P."/>
            <person name="Marimuthu A."/>
            <person name="Anand S."/>
            <person name="Sundaram H."/>
            <person name="Kingsbury R."/>
            <person name="Harsha H.C."/>
            <person name="Nair B."/>
            <person name="Prasad T.S."/>
            <person name="Chauhan D.S."/>
            <person name="Katoch K."/>
            <person name="Katoch V.M."/>
            <person name="Kumar P."/>
            <person name="Chaerkady R."/>
            <person name="Ramachandran S."/>
            <person name="Dash D."/>
            <person name="Pandey A."/>
        </authorList>
    </citation>
    <scope>IDENTIFICATION BY MASS SPECTROMETRY [LARGE SCALE ANALYSIS]</scope>
    <source>
        <strain>ATCC 25618 / H37Rv</strain>
    </source>
</reference>
<reference key="10">
    <citation type="journal article" date="2013" name="Appl. Microbiol. Biotechnol.">
        <title>The DprE1 enzyme, one of the most vulnerable targets of Mycobacterium tuberculosis.</title>
        <authorList>
            <person name="Riccardi G."/>
            <person name="Pasca M.R."/>
            <person name="Chiarelli L.R."/>
            <person name="Manina G."/>
            <person name="Mattevi A."/>
            <person name="Binda C."/>
        </authorList>
    </citation>
    <scope>REVIEW</scope>
    <scope>DRUG TARGET</scope>
</reference>
<reference key="11">
    <citation type="journal article" date="2013" name="J. Med. Chem.">
        <title>Azaindoles: noncovalent DprE1 inhibitors from scaffold morphing efforts, kill Mycobacterium tuberculosis and are efficacious in vivo.</title>
        <authorList>
            <person name="Shirude P.S."/>
            <person name="Shandil R."/>
            <person name="Sadler C."/>
            <person name="Naik M."/>
            <person name="Hosagrahara V."/>
            <person name="Hameed S."/>
            <person name="Shinde V."/>
            <person name="Bathula C."/>
            <person name="Humnabadkar V."/>
            <person name="Kumar N."/>
            <person name="Reddy J."/>
            <person name="Panduga V."/>
            <person name="Sharma S."/>
            <person name="Ambady A."/>
            <person name="Hegde N."/>
            <person name="Whiteaker J."/>
            <person name="McLaughlin R.E."/>
            <person name="Gardner H."/>
            <person name="Madhavapeddi P."/>
            <person name="Ramachandran V."/>
            <person name="Kaur P."/>
            <person name="Narayan A."/>
            <person name="Guptha S."/>
            <person name="Awasthy D."/>
            <person name="Narayan C."/>
            <person name="Mahadevaswamy J."/>
            <person name="Vishwas K.G."/>
            <person name="Ahuja V."/>
            <person name="Srivastava A."/>
            <person name="Prabhakar K.R."/>
            <person name="Bharath S."/>
            <person name="Kale R."/>
            <person name="Ramaiah M."/>
            <person name="Choudhury N.R."/>
            <person name="Sambandamurthy V.K."/>
            <person name="Solapure S."/>
            <person name="Iyer P.S."/>
            <person name="Narayanan S."/>
            <person name="Chatterji M."/>
        </authorList>
    </citation>
    <scope>ACTIVITY REGULATION</scope>
</reference>
<reference key="12">
    <citation type="journal article" date="2014" name="Curr. Pharm. Des.">
        <title>DprE1--from the discovery to the promising tuberculosis drug target.</title>
        <authorList>
            <person name="Mikusova K."/>
            <person name="Makarov V."/>
            <person name="Neres J."/>
        </authorList>
    </citation>
    <scope>REVIEW</scope>
    <scope>DRUG TARGET</scope>
</reference>
<reference key="13">
    <citation type="journal article" date="2014" name="J. Med. Chem.">
        <title>Discovery of pyrazolopyridones as a novel class of noncovalent DprE1 inhibitor with potent anti-mycobacterial activity.</title>
        <authorList>
            <person name="Panda M."/>
            <person name="Ramachandran S."/>
            <person name="Ramachandran V."/>
            <person name="Shirude P.S."/>
            <person name="Humnabadkar V."/>
            <person name="Nagalapur K."/>
            <person name="Sharma S."/>
            <person name="Kaur P."/>
            <person name="Guptha S."/>
            <person name="Narayan A."/>
            <person name="Mahadevaswamy J."/>
            <person name="Ambady A."/>
            <person name="Hegde N."/>
            <person name="Rudrapatna S.S."/>
            <person name="Hosagrahara V.P."/>
            <person name="Sambandamurthy V.K."/>
            <person name="Raichurkar A."/>
        </authorList>
    </citation>
    <scope>ACTIVITY REGULATION</scope>
</reference>
<reference key="14">
    <citation type="journal article" date="2014" name="Mol. Microbiol.">
        <title>Assessing the essentiality of the decaprenyl-phospho-D-arabinofuranose pathway in Mycobacterium tuberculosis using conditional mutants.</title>
        <authorList>
            <person name="Kolly G.S."/>
            <person name="Boldrin F."/>
            <person name="Sala C."/>
            <person name="Dhar N."/>
            <person name="Hartkoorn R.C."/>
            <person name="Ventura M."/>
            <person name="Serafini A."/>
            <person name="McKinney J.D."/>
            <person name="Manganelli R."/>
            <person name="Cole S.T."/>
        </authorList>
    </citation>
    <scope>DISRUPTION PHENOTYPE</scope>
    <scope>PATHWAY</scope>
    <source>
        <strain>H37Rv</strain>
    </source>
</reference>
<reference key="15">
    <citation type="journal article" date="2015" name="ACS Chem. Biol.">
        <title>DprE1 is a vulnerable tuberculosis drug target due to its cell wall localization.</title>
        <authorList>
            <person name="Brecik M."/>
            <person name="Centarova I."/>
            <person name="Mukherjee R."/>
            <person name="Kolly G.S."/>
            <person name="Huszar S."/>
            <person name="Bobovska A."/>
            <person name="Kilacskova E."/>
            <person name="Mokosova V."/>
            <person name="Svetlikova Z."/>
            <person name="Sarkan M."/>
            <person name="Neres J."/>
            <person name="Kordulakova J."/>
            <person name="Cole S.T."/>
            <person name="Mikusova K."/>
        </authorList>
    </citation>
    <scope>SUBCELLULAR LOCATION</scope>
    <source>
        <strain>H37Rv</strain>
    </source>
</reference>
<reference key="16">
    <citation type="journal article" date="2015" name="Antimicrob. Agents Chemother.">
        <title>The 8-pyrrole-benzothiazinones are noncovalent inhibitors of DprE1 from Mycobacterium tuberculosis.</title>
        <authorList>
            <person name="Makarov V."/>
            <person name="Neres J."/>
            <person name="Hartkoorn R.C."/>
            <person name="Ryabova O.B."/>
            <person name="Kazakova E."/>
            <person name="Sarkan M."/>
            <person name="Huszar S."/>
            <person name="Piton J."/>
            <person name="Kolly G.S."/>
            <person name="Vocat A."/>
            <person name="Conroy T.M."/>
            <person name="Mikusova K."/>
            <person name="Cole S.T."/>
        </authorList>
    </citation>
    <scope>ACTIVITY REGULATION</scope>
    <source>
        <strain>H37Rv</strain>
    </source>
</reference>
<reference key="17">
    <citation type="journal article" date="2015" name="PLoS ONE">
        <title>Structure, dynamics, and interaction of Mycobacterium tuberculosis (Mtb) DprE1 and DprE2 examined by molecular modeling, simulation, and electrostatic studies.</title>
        <authorList>
            <person name="Bhutani I."/>
            <person name="Loharch S."/>
            <person name="Gupta P."/>
            <person name="Madathil R."/>
            <person name="Parkesh R."/>
        </authorList>
    </citation>
    <scope>INTERACTION WITH DPRE2</scope>
</reference>
<reference key="18">
    <citation type="journal article" date="2016" name="Antimicrob. Agents Chemother.">
        <title>Characterization of DprE1-mediated benzothiazinone resistance in Mycobacterium tuberculosis.</title>
        <authorList>
            <person name="Foo C.S."/>
            <person name="Lechartier B."/>
            <person name="Kolly G.S."/>
            <person name="Boy-Roettger S."/>
            <person name="Neres J."/>
            <person name="Rybniker J."/>
            <person name="Lupien A."/>
            <person name="Sala C."/>
            <person name="Piton J."/>
            <person name="Cole S.T."/>
        </authorList>
    </citation>
    <scope>MUTAGENESIS OF CYS-387</scope>
    <source>
        <strain>H37Rv</strain>
    </source>
</reference>
<reference key="19">
    <citation type="journal article" date="2017" name="Drug Discov. Today">
        <title>Structural studies of Mycobacterium tuberculosis DprE1 interacting with its inhibitors.</title>
        <authorList>
            <person name="Piton J."/>
            <person name="Foo C.S."/>
            <person name="Cole S.T."/>
        </authorList>
    </citation>
    <scope>REVIEW</scope>
    <scope>ACTIVITY REGULATION</scope>
</reference>
<reference key="20">
    <citation type="journal article" date="2012" name="Proc. Natl. Acad. Sci. U.S.A.">
        <title>Structural basis of inhibition of Mycobacterium tuberculosis DprE1 by benzothiazinone inhibitors.</title>
        <authorList>
            <person name="Batt S.M."/>
            <person name="Jabeen T."/>
            <person name="Bhowruth V."/>
            <person name="Quill L."/>
            <person name="Lund P.A."/>
            <person name="Eggeling L."/>
            <person name="Alderwick L.J."/>
            <person name="Futterer K."/>
            <person name="Besra G.S."/>
        </authorList>
    </citation>
    <scope>X-RAY CRYSTALLOGRAPHY (2.04 ANGSTROMS) IN COMPLEXES WITH FAD AND BENZOTHIAZINONE INHIBITORS</scope>
    <scope>FUNCTION</scope>
    <scope>CATALYTIC ACTIVITY</scope>
    <scope>ACTIVITY REGULATION</scope>
    <scope>SUBUNIT</scope>
</reference>
<reference key="21">
    <citation type="journal article" date="2013" name="Proc. Natl. Acad. Sci. U.S.A.">
        <title>Identification of a small molecule with activity against drug-resistant and persistent tuberculosis.</title>
        <authorList>
            <person name="Wang F."/>
            <person name="Sambandan D."/>
            <person name="Halder R."/>
            <person name="Wang J."/>
            <person name="Batt S.M."/>
            <person name="Weinrick B."/>
            <person name="Ahmad I."/>
            <person name="Yang P."/>
            <person name="Zhang Y."/>
            <person name="Kim J."/>
            <person name="Hassani M."/>
            <person name="Huszar S."/>
            <person name="Trefzer C."/>
            <person name="Ma Z."/>
            <person name="Kaneko T."/>
            <person name="Mdluli K.E."/>
            <person name="Franzblau S."/>
            <person name="Chatterjee A.K."/>
            <person name="Johnsson K."/>
            <person name="Johnson K."/>
            <person name="Mikusova K."/>
            <person name="Besra G.S."/>
            <person name="Futterer K."/>
            <person name="Robbins S.H."/>
            <person name="Barnes S.W."/>
            <person name="Walker J.R."/>
            <person name="Jacobs W.R. Jr."/>
            <person name="Schultz P.G."/>
        </authorList>
    </citation>
    <scope>X-RAY CRYSTALLOGRAPHY (2.61 ANGSTROMS) IN COMPLEX WITH TCA1 INHIBITOR AND FAD</scope>
    <scope>INHIBITOR SCREENING</scope>
    <scope>ACTIVITY REGULATION</scope>
    <scope>TCA1-RESISTANT VARIANT CYS-314</scope>
</reference>
<reference key="22">
    <citation type="journal article" date="2014" name="EMBO Mol. Med.">
        <title>Towards a new combination therapy for tuberculosis with next generation benzothiazinones.</title>
        <authorList>
            <person name="Makarov V."/>
            <person name="Lechartier B."/>
            <person name="Zhang M."/>
            <person name="Neres J."/>
            <person name="van der Sar A.M."/>
            <person name="Raadsen S.A."/>
            <person name="Hartkoorn R.C."/>
            <person name="Ryabova O.B."/>
            <person name="Vocat A."/>
            <person name="Decosterd L.A."/>
            <person name="Widmer N."/>
            <person name="Buclin T."/>
            <person name="Bitter W."/>
            <person name="Andries K."/>
            <person name="Pojer F."/>
            <person name="Dyson P.J."/>
            <person name="Cole S.T."/>
        </authorList>
    </citation>
    <scope>X-RAY CRYSTALLOGRAPHY (1.88 ANGSTROMS) IN COMPLEX WITH FAD AND THE BENZOTHIAZINONE PBTZ169 INHIBITOR</scope>
    <scope>ACTIVITY REGULATION</scope>
</reference>
<reference key="23">
    <citation type="journal article" date="2015" name="ACS Chem. Biol.">
        <title>2-Carboxyquinoxalines kill Mycobacterium tuberculosis through noncovalent inhibition of DprE1.</title>
        <authorList>
            <person name="Neres J."/>
            <person name="Hartkoorn R.C."/>
            <person name="Chiarelli L.R."/>
            <person name="Gadupudi R."/>
            <person name="Pasca M.R."/>
            <person name="Mori G."/>
            <person name="Venturelli A."/>
            <person name="Savina S."/>
            <person name="Makarov V."/>
            <person name="Kolly G.S."/>
            <person name="Molteni E."/>
            <person name="Binda C."/>
            <person name="Dhar N."/>
            <person name="Ferrari S."/>
            <person name="Brodin P."/>
            <person name="Delorme V."/>
            <person name="Landry V."/>
            <person name="de Jesus Lopes Ribeiro A.L."/>
            <person name="Farina D."/>
            <person name="Saxena P."/>
            <person name="Pojer F."/>
            <person name="Carta A."/>
            <person name="Luciani R."/>
            <person name="Porta A."/>
            <person name="Zanoni G."/>
            <person name="De Rossi E."/>
            <person name="Costi M.P."/>
            <person name="Riccardi G."/>
            <person name="Cole S.T."/>
        </authorList>
    </citation>
    <scope>X-RAY CRYSTALLOGRAPHY (1.79 ANGSTROMS) IN COMPLEXES WITH FAD AND DIFFERENT QUINOXALINE INHIBITORS</scope>
    <scope>ACTIVITY REGULATION</scope>
    <scope>INHIBITOR SCREENING</scope>
    <scope>TY38C-RESISTANT VARIANTS TRC11 AND TRC12</scope>
    <scope>FUNCTION</scope>
    <scope>BIOPHYSICOCHEMICAL PROPERTIES</scope>
    <scope>MUTAGENESIS OF GLY-17 AND LEU-368</scope>
</reference>
<feature type="chain" id="PRO_0000390891" description="Decaprenylphosphoryl-beta-D-ribose oxidase">
    <location>
        <begin position="1"/>
        <end position="461"/>
    </location>
</feature>
<feature type="domain" description="FAD-binding PCMH-type" evidence="1">
    <location>
        <begin position="19"/>
        <end position="194"/>
    </location>
</feature>
<feature type="binding site" evidence="8 9 11 14 32 34">
    <location>
        <begin position="53"/>
        <end position="63"/>
    </location>
    <ligand>
        <name>FAD</name>
        <dbReference type="ChEBI" id="CHEBI:57692"/>
    </ligand>
</feature>
<feature type="binding site" evidence="8 9 11 14 32 33 34">
    <location>
        <position position="117"/>
    </location>
    <ligand>
        <name>FAD</name>
        <dbReference type="ChEBI" id="CHEBI:57692"/>
    </ligand>
</feature>
<feature type="binding site" evidence="8 9 11 14 32 33 34">
    <location>
        <begin position="122"/>
        <end position="125"/>
    </location>
    <ligand>
        <name>FAD</name>
        <dbReference type="ChEBI" id="CHEBI:57692"/>
    </ligand>
</feature>
<feature type="binding site" evidence="8 9 11 14 32 33 34">
    <location>
        <begin position="129"/>
        <end position="132"/>
    </location>
    <ligand>
        <name>FAD</name>
        <dbReference type="ChEBI" id="CHEBI:57692"/>
    </ligand>
</feature>
<feature type="binding site" evidence="8 9 11 14 32 33 34">
    <location>
        <position position="184"/>
    </location>
    <ligand>
        <name>FAD</name>
        <dbReference type="ChEBI" id="CHEBI:57692"/>
    </ligand>
</feature>
<feature type="binding site" evidence="8 9 11 14 32 33 34">
    <location>
        <position position="415"/>
    </location>
    <ligand>
        <name>FAD</name>
        <dbReference type="ChEBI" id="CHEBI:57692"/>
    </ligand>
</feature>
<feature type="sequence variant" description="In strain: TRC11; Ty38c-resistant mutant strain lacking Rv3406, but sensitive to moxifloxacin." evidence="14">
    <original>G</original>
    <variation>C</variation>
    <location>
        <position position="17"/>
    </location>
</feature>
<feature type="sequence variant" description="In a spontaneous TCA1-resistant mutant strain, but sensitive to BTZ." evidence="9">
    <original>Y</original>
    <variation>C</variation>
    <location>
        <position position="314"/>
    </location>
</feature>
<feature type="sequence variant" description="In strain: TRC12; Ty38c-resistant mutant strain lacking Rv3406, but sensitive to moxifloxacin." evidence="14">
    <original>L</original>
    <variation>P</variation>
    <location>
        <position position="368"/>
    </location>
</feature>
<feature type="sequence variant" description="In strain: NTB9; BTZ043-resistant." evidence="5">
    <original>C</original>
    <variation>G</variation>
    <location>
        <position position="387"/>
    </location>
</feature>
<feature type="sequence variant" description="In strain: NTB1; BTZ043-resistant." evidence="5">
    <original>C</original>
    <variation>S</variation>
    <location>
        <position position="387"/>
    </location>
</feature>
<feature type="mutagenesis site" description="Significantly less susceptible to Ty38c inhibition. 34-fold reduction in catalytic activity." evidence="14">
    <original>G</original>
    <variation>C</variation>
    <location>
        <position position="17"/>
    </location>
</feature>
<feature type="mutagenesis site" description="Significantly less susceptible to Ty38c inhibition. 7-fold reduction in catalytic activity." evidence="14">
    <original>L</original>
    <variation>P</variation>
    <location>
        <position position="368"/>
    </location>
</feature>
<feature type="mutagenesis site" description="Confers resistance to BTZ043 and PBTZ169. Decreases M.tuberculosis cytotoxicity in macrophages. Does not affect binding affinity of the substrate to the enzyme, and only slightly affects catalytic efficiency. Is only partially inhibited by PBTZ169 at high concentrations, while totally inhibited by the non-covalent inhibitor Ty38c." evidence="18">
    <original>C</original>
    <variation>A</variation>
    <variation>S</variation>
    <variation>T</variation>
    <location>
        <position position="387"/>
    </location>
</feature>
<feature type="mutagenesis site" description="Confers resistance to BTZ043 and PBTZ169. Loss of covalent modification with BTZ043. Decreases M.tuberculosis cytotoxicity in macrophages. Does not affect binding affinity of the substrate to the enzyme, but reduces catalytic efficiency by 4-fold. Is only partially inhibited by PBTZ169 at high concentrations, while nearly totally inhibited by the non-covalent inhibitor Ty38c." evidence="7 18">
    <original>C</original>
    <variation>G</variation>
    <location>
        <position position="387"/>
    </location>
</feature>
<feature type="mutagenesis site" description="Confers resistance to BTZ043 and PBTZ169. Decreases M.tuberculosis cytotoxicity in macrophages. Does not affect binding affinity of the substrate to the enzyme, but reduces catalytic efficiency by 4-fold. Is only partially inhibited by PBTZ169 at high concentrations, while totally inhibited by the non-covalent inhibitor Ty38c." evidence="18">
    <original>C</original>
    <variation>N</variation>
    <location>
        <position position="387"/>
    </location>
</feature>
<feature type="strand" evidence="37">
    <location>
        <begin position="7"/>
        <end position="13"/>
    </location>
</feature>
<feature type="strand" evidence="37">
    <location>
        <begin position="22"/>
        <end position="28"/>
    </location>
</feature>
<feature type="helix" evidence="37">
    <location>
        <begin position="32"/>
        <end position="44"/>
    </location>
</feature>
<feature type="strand" evidence="38">
    <location>
        <begin position="47"/>
        <end position="49"/>
    </location>
</feature>
<feature type="strand" evidence="37">
    <location>
        <begin position="51"/>
        <end position="54"/>
    </location>
</feature>
<feature type="strand" evidence="37">
    <location>
        <begin position="59"/>
        <end position="62"/>
    </location>
</feature>
<feature type="strand" evidence="37">
    <location>
        <begin position="69"/>
        <end position="73"/>
    </location>
</feature>
<feature type="strand" evidence="37">
    <location>
        <begin position="80"/>
        <end position="84"/>
    </location>
</feature>
<feature type="turn" evidence="37">
    <location>
        <begin position="85"/>
        <end position="87"/>
    </location>
</feature>
<feature type="strand" evidence="37">
    <location>
        <begin position="89"/>
        <end position="93"/>
    </location>
</feature>
<feature type="helix" evidence="37">
    <location>
        <begin position="98"/>
        <end position="105"/>
    </location>
</feature>
<feature type="helix" evidence="37">
    <location>
        <begin position="106"/>
        <end position="108"/>
    </location>
</feature>
<feature type="strand" evidence="42">
    <location>
        <begin position="117"/>
        <end position="119"/>
    </location>
</feature>
<feature type="helix" evidence="37">
    <location>
        <begin position="123"/>
        <end position="129"/>
    </location>
</feature>
<feature type="helix" evidence="37">
    <location>
        <begin position="136"/>
        <end position="139"/>
    </location>
</feature>
<feature type="helix" evidence="37">
    <location>
        <begin position="142"/>
        <end position="145"/>
    </location>
</feature>
<feature type="strand" evidence="37">
    <location>
        <begin position="146"/>
        <end position="152"/>
    </location>
</feature>
<feature type="strand" evidence="37">
    <location>
        <begin position="158"/>
        <end position="161"/>
    </location>
</feature>
<feature type="strand" evidence="37">
    <location>
        <begin position="163"/>
        <end position="165"/>
    </location>
</feature>
<feature type="helix" evidence="37">
    <location>
        <begin position="168"/>
        <end position="174"/>
    </location>
</feature>
<feature type="turn" evidence="37">
    <location>
        <begin position="178"/>
        <end position="181"/>
    </location>
</feature>
<feature type="strand" evidence="37">
    <location>
        <begin position="183"/>
        <end position="190"/>
    </location>
</feature>
<feature type="strand" evidence="37">
    <location>
        <begin position="197"/>
        <end position="205"/>
    </location>
</feature>
<feature type="helix" evidence="37">
    <location>
        <begin position="209"/>
        <end position="217"/>
    </location>
</feature>
<feature type="helix" evidence="37">
    <location>
        <begin position="220"/>
        <end position="223"/>
    </location>
</feature>
<feature type="strand" evidence="37">
    <location>
        <begin position="225"/>
        <end position="231"/>
    </location>
</feature>
<feature type="strand" evidence="40">
    <location>
        <begin position="233"/>
        <end position="235"/>
    </location>
</feature>
<feature type="turn" evidence="37">
    <location>
        <begin position="237"/>
        <end position="241"/>
    </location>
</feature>
<feature type="strand" evidence="37">
    <location>
        <begin position="243"/>
        <end position="250"/>
    </location>
</feature>
<feature type="helix" evidence="37">
    <location>
        <begin position="253"/>
        <end position="255"/>
    </location>
</feature>
<feature type="helix" evidence="37">
    <location>
        <begin position="258"/>
        <end position="260"/>
    </location>
</feature>
<feature type="strand" evidence="41">
    <location>
        <begin position="261"/>
        <end position="263"/>
    </location>
</feature>
<feature type="turn" evidence="39">
    <location>
        <begin position="275"/>
        <end position="277"/>
    </location>
</feature>
<feature type="helix" evidence="37">
    <location>
        <begin position="285"/>
        <end position="288"/>
    </location>
</feature>
<feature type="helix" evidence="37">
    <location>
        <begin position="291"/>
        <end position="300"/>
    </location>
</feature>
<feature type="strand" evidence="37">
    <location>
        <begin position="303"/>
        <end position="310"/>
    </location>
</feature>
<feature type="turn" evidence="37">
    <location>
        <begin position="311"/>
        <end position="313"/>
    </location>
</feature>
<feature type="helix" evidence="39">
    <location>
        <begin position="316"/>
        <end position="318"/>
    </location>
</feature>
<feature type="helix" evidence="36">
    <location>
        <begin position="324"/>
        <end position="327"/>
    </location>
</feature>
<feature type="turn" evidence="36">
    <location>
        <begin position="328"/>
        <end position="330"/>
    </location>
</feature>
<feature type="strand" evidence="37">
    <location>
        <begin position="332"/>
        <end position="340"/>
    </location>
</feature>
<feature type="helix" evidence="35">
    <location>
        <begin position="341"/>
        <end position="343"/>
    </location>
</feature>
<feature type="helix" evidence="37">
    <location>
        <begin position="344"/>
        <end position="356"/>
    </location>
</feature>
<feature type="strand" evidence="37">
    <location>
        <begin position="365"/>
        <end position="369"/>
    </location>
</feature>
<feature type="strand" evidence="37">
    <location>
        <begin position="382"/>
        <end position="391"/>
    </location>
</feature>
<feature type="helix" evidence="37">
    <location>
        <begin position="396"/>
        <end position="409"/>
    </location>
</feature>
<feature type="helix" evidence="37">
    <location>
        <begin position="416"/>
        <end position="418"/>
    </location>
</feature>
<feature type="helix" evidence="37">
    <location>
        <begin position="424"/>
        <end position="430"/>
    </location>
</feature>
<feature type="helix" evidence="37">
    <location>
        <begin position="434"/>
        <end position="444"/>
    </location>
</feature>
<feature type="helix" evidence="37">
    <location>
        <begin position="453"/>
        <end position="457"/>
    </location>
</feature>
<proteinExistence type="evidence at protein level"/>
<protein>
    <recommendedName>
        <fullName evidence="19 25 26">Decaprenylphosphoryl-beta-D-ribose oxidase</fullName>
        <ecNumber evidence="8">1.1.98.3</ecNumber>
    </recommendedName>
    <alternativeName>
        <fullName evidence="21">Decaprenylphospho-beta-D-ribofuranose 2-dehydrogenase</fullName>
    </alternativeName>
    <alternativeName>
        <fullName evidence="31">Decaprenylphosphoryl-beta-D-ribofuranose 2'-epimerase subunit DprE1</fullName>
        <shortName evidence="31">Decaprenyl-phosphoribose 2'-epimerase subunit 1</shortName>
    </alternativeName>
    <alternativeName>
        <fullName evidence="28">Decaprenylphosphoryl-beta-D-ribofuranose 2'-oxidase</fullName>
    </alternativeName>
    <alternativeName>
        <fullName evidence="24">Decaprenylphosphoryl-beta-D-ribose 2-epimerase flavoprotein subunit</fullName>
    </alternativeName>
    <alternativeName>
        <fullName evidence="21">FAD-dependent decaprenylphosphoryl-beta-D-ribofuranose 2-oxidase</fullName>
    </alternativeName>
</protein>
<comment type="function">
    <text evidence="2 3 5 8 12 14 31">Component of the DprE1-DprE2 complex that catalyzes the 2-step epimerization of decaprenyl-phospho-ribose (DPR) to decaprenyl-phospho-arabinose (DPA), a key precursor that serves as the arabinose donor required for the synthesis of cell-wall arabinans (PubMed:16291675, PubMed:19299584). DprE1 catalyzes the first step of epimerization, namely FAD-dependent oxidation of the C2' hydroxyl of DPR to yield the keto intermediate decaprenyl-phospho-2'-keto-D-arabinose (DPX) (PubMed:22733761). The intermediate DPX is then transferred to DprE2 subunit of the epimerase complex, most probably through a 'substrate channel' at the interface of DprE1-DprE2 complex (PubMed:25789990). Can also use farnesyl-phosphoryl-beta-D-ribofuranose (FPR) as substrate in vitro (PubMed:25427196). Appears to be essential for the growth and survival of M.tuberculosis (PubMed:12657046, PubMed:24517327).</text>
</comment>
<comment type="function">
    <text evidence="20 22 23">DprE1 is a highly vulnerable and fully validated tuberculosis drug target.</text>
</comment>
<comment type="catalytic activity">
    <reaction evidence="8">
        <text>trans,octa-cis-decaprenylphospho-beta-D-ribofuranose + FAD + H(+) = trans,octa-cis-decaprenylphospho-beta-D-erythro-pentofuranosid-2-ulose + FADH2</text>
        <dbReference type="Rhea" id="RHEA:33899"/>
        <dbReference type="ChEBI" id="CHEBI:15378"/>
        <dbReference type="ChEBI" id="CHEBI:57692"/>
        <dbReference type="ChEBI" id="CHEBI:58307"/>
        <dbReference type="ChEBI" id="CHEBI:65067"/>
        <dbReference type="ChEBI" id="CHEBI:66881"/>
        <dbReference type="EC" id="1.1.98.3"/>
    </reaction>
</comment>
<comment type="activity regulation">
    <text evidence="5 6 7 8 9 10 11 13 14 17 27">Is inhibited by 8-nitro-benzothiazinones (BTZs) such as BTZ043 and PBTZ169; BTZs are a new class of antimycobacterial agents that kill M.tuberculosis in vitro, ex vivo, and in mouse models of tuberculosis (PubMed:19299584, PubMed:20828197, PubMed:22733761, PubMed:24500695). Is also inhibited by dinitrobenzamide derivatives (DNBs), which thus block formation of both cell-wall lipoarabinomannan and arabinogalactan via inhibition of decaprenyl-phospho-arabinose (DPA) synthesis; DNBs show high activity against intracellular growth of M.tuberculosis inside macrophages, including extensively drug resistant (XDR) strains (PubMed:19876393). BTZs and DNBs are suicide inhibitors that act via covalent modification of DprE1; the essential nitro group of these compounds is reduced by DprE1 to a nitroso group, which then specifically reacts with Cys-387 of DprE1 to form an irreversible semimercaptal adduct (PubMed:20828197, PubMed:22733761, PubMed:24500695). Many other compounds with diverse scaffolds were found to act as either covalent (e.g. nitroquinoxalines, nitroimidazoles) or non-covalent (e.g. the benzothiazole derivative TCA1, the 2-carboxyquinoxaline Ty38C, 8-pyrrole-benzothiazinones, 1,4-azaindoles, pyrazolopyridones, 4-aminoquinolone piperidine amides) DprE1 inhibitors (PubMed:23776209, PubMed:24215368, PubMed:24818517, PubMed:25427196, PubMed:25987616, PubMed:27666194).</text>
</comment>
<comment type="biophysicochemical properties">
    <kinetics>
        <text evidence="14">kcat is 4.1 min(-1) with farnesyl-phosphoryl-beta-D-ribofuranose as substrate (at pH 8 and 30 degrees Celsius).</text>
    </kinetics>
</comment>
<comment type="pathway">
    <text evidence="29 30">Cell wall biogenesis; cell wall polysaccharide biosynthesis.</text>
</comment>
<comment type="subunit">
    <text evidence="8 15">Monomer. Although forming apparent dimer in crystals, DprE1 does not dimerize appreciably in solution (PubMed:22733761). Interacts with DprE2 to form an epimerase complex (PubMed:25789990).</text>
</comment>
<comment type="subcellular location">
    <subcellularLocation>
        <location evidence="16">Periplasm</location>
    </subcellularLocation>
</comment>
<comment type="disruption phenotype">
    <text evidence="2 12">Traditional knockout mutant with dprE1 disruption could not be achieved, suggesting this gene is essential (PubMed:24517327). Conditional knock-down mutant of dprE1 show that down-regulation of DprE1 results in rapid in vitro growth arrest, swelling of the bacteria, cell wall damage, stop of cell division or lysis, decreased survival in macrophages and virulence attenuation (PubMed:24517327). Cells lacking this gene display impaired growth (PubMed:12657046).</text>
</comment>
<comment type="miscellaneous">
    <text evidence="4">Was identified as a high-confidence drug target.</text>
</comment>
<comment type="similarity">
    <text evidence="28">Belongs to the DprE1 family.</text>
</comment>
<organism>
    <name type="scientific">Mycobacterium tuberculosis (strain ATCC 25618 / H37Rv)</name>
    <dbReference type="NCBI Taxonomy" id="83332"/>
    <lineage>
        <taxon>Bacteria</taxon>
        <taxon>Bacillati</taxon>
        <taxon>Actinomycetota</taxon>
        <taxon>Actinomycetes</taxon>
        <taxon>Mycobacteriales</taxon>
        <taxon>Mycobacteriaceae</taxon>
        <taxon>Mycobacterium</taxon>
        <taxon>Mycobacterium tuberculosis complex</taxon>
    </lineage>
</organism>
<gene>
    <name evidence="19 21" type="primary">dprE1</name>
    <name type="ordered locus">Rv3790</name>
</gene>
<keyword id="KW-0002">3D-structure</keyword>
<keyword id="KW-0046">Antibiotic resistance</keyword>
<keyword id="KW-0961">Cell wall biogenesis/degradation</keyword>
<keyword id="KW-0274">FAD</keyword>
<keyword id="KW-0285">Flavoprotein</keyword>
<keyword id="KW-0560">Oxidoreductase</keyword>
<keyword id="KW-0574">Periplasm</keyword>
<keyword id="KW-1185">Reference proteome</keyword>
<evidence type="ECO:0000255" key="1">
    <source>
        <dbReference type="PROSITE-ProRule" id="PRU00718"/>
    </source>
</evidence>
<evidence type="ECO:0000269" key="2">
    <source>
    </source>
</evidence>
<evidence type="ECO:0000269" key="3">
    <source>
    </source>
</evidence>
<evidence type="ECO:0000269" key="4">
    <source>
    </source>
</evidence>
<evidence type="ECO:0000269" key="5">
    <source>
    </source>
</evidence>
<evidence type="ECO:0000269" key="6">
    <source>
    </source>
</evidence>
<evidence type="ECO:0000269" key="7">
    <source>
    </source>
</evidence>
<evidence type="ECO:0000269" key="8">
    <source>
    </source>
</evidence>
<evidence type="ECO:0000269" key="9">
    <source>
    </source>
</evidence>
<evidence type="ECO:0000269" key="10">
    <source>
    </source>
</evidence>
<evidence type="ECO:0000269" key="11">
    <source>
    </source>
</evidence>
<evidence type="ECO:0000269" key="12">
    <source>
    </source>
</evidence>
<evidence type="ECO:0000269" key="13">
    <source>
    </source>
</evidence>
<evidence type="ECO:0000269" key="14">
    <source>
    </source>
</evidence>
<evidence type="ECO:0000269" key="15">
    <source>
    </source>
</evidence>
<evidence type="ECO:0000269" key="16">
    <source>
    </source>
</evidence>
<evidence type="ECO:0000269" key="17">
    <source>
    </source>
</evidence>
<evidence type="ECO:0000269" key="18">
    <source>
    </source>
</evidence>
<evidence type="ECO:0000303" key="19">
    <source>
    </source>
</evidence>
<evidence type="ECO:0000303" key="20">
    <source>
    </source>
</evidence>
<evidence type="ECO:0000303" key="21">
    <source>
    </source>
</evidence>
<evidence type="ECO:0000303" key="22">
    <source>
    </source>
</evidence>
<evidence type="ECO:0000303" key="23">
    <source>
    </source>
</evidence>
<evidence type="ECO:0000303" key="24">
    <source>
    </source>
</evidence>
<evidence type="ECO:0000303" key="25">
    <source>
    </source>
</evidence>
<evidence type="ECO:0000303" key="26">
    <source>
    </source>
</evidence>
<evidence type="ECO:0000303" key="27">
    <source>
    </source>
</evidence>
<evidence type="ECO:0000305" key="28"/>
<evidence type="ECO:0000305" key="29">
    <source>
    </source>
</evidence>
<evidence type="ECO:0000305" key="30">
    <source>
    </source>
</evidence>
<evidence type="ECO:0000305" key="31">
    <source>
    </source>
</evidence>
<evidence type="ECO:0007744" key="32">
    <source>
        <dbReference type="PDB" id="4FDP"/>
    </source>
</evidence>
<evidence type="ECO:0007744" key="33">
    <source>
        <dbReference type="PDB" id="4KW5"/>
    </source>
</evidence>
<evidence type="ECO:0007744" key="34">
    <source>
        <dbReference type="PDB" id="4NCR"/>
    </source>
</evidence>
<evidence type="ECO:0007829" key="35">
    <source>
        <dbReference type="PDB" id="4FDN"/>
    </source>
</evidence>
<evidence type="ECO:0007829" key="36">
    <source>
        <dbReference type="PDB" id="4FEH"/>
    </source>
</evidence>
<evidence type="ECO:0007829" key="37">
    <source>
        <dbReference type="PDB" id="4NCR"/>
    </source>
</evidence>
<evidence type="ECO:0007829" key="38">
    <source>
        <dbReference type="PDB" id="4PFA"/>
    </source>
</evidence>
<evidence type="ECO:0007829" key="39">
    <source>
        <dbReference type="PDB" id="5OEL"/>
    </source>
</evidence>
<evidence type="ECO:0007829" key="40">
    <source>
        <dbReference type="PDB" id="5OEQ"/>
    </source>
</evidence>
<evidence type="ECO:0007829" key="41">
    <source>
        <dbReference type="PDB" id="6HEZ"/>
    </source>
</evidence>
<evidence type="ECO:0007829" key="42">
    <source>
        <dbReference type="PDB" id="6HFW"/>
    </source>
</evidence>
<name>DPRE1_MYCTU</name>
<sequence>MLSVGATTTATRLTGWGRTAPSVANVLRTPDAEMIVKAVARVAESGGGRGAIARGLGRSYGDNAQNGGGLVIDMTPLNTIHSIDADTKLVDIDAGVNLDQLMKAALPFGLWVPVLPGTRQVTVGGAIACDIHGKNHHSAGSFGNHVRSMDLLTADGEIRHLTPTGEDAELFWATVGGNGLTGIIMRATIEMTPTSTAYFIADGDVTASLDETIALHSDGSEARYTYSSAWFDAISAPPKLGRAAVSRGRLATVEQLPAKLRSEPLKFDAPQLLTLPDVFPNGLANKYTFGPIGELWYRKSGTYRGKVQNLTQFYHPLDMFGEWNRAYGPAGFLQYQFVIPTEAVDEFKKIIGVIQASGHYSFLNVFKLFGPRNQAPLSFPIPGWNICVDFPIKDGLGKFVSELDRRVLEFGGRLYTAKDSRTTAETFHAMYPRVDEWISVRRKVDPLRVFASDMARRLELL</sequence>